<evidence type="ECO:0000255" key="1">
    <source>
        <dbReference type="HAMAP-Rule" id="MF_01844"/>
    </source>
</evidence>
<proteinExistence type="inferred from homology"/>
<accession>Q12KG9</accession>
<gene>
    <name evidence="1" type="primary">nhaA2</name>
    <name type="ordered locus">Sden_2778</name>
</gene>
<feature type="chain" id="PRO_0000334424" description="Na(+)/H(+) antiporter NhaA 2">
    <location>
        <begin position="1"/>
        <end position="398"/>
    </location>
</feature>
<feature type="transmembrane region" description="Helical" evidence="1">
    <location>
        <begin position="17"/>
        <end position="37"/>
    </location>
</feature>
<feature type="transmembrane region" description="Helical" evidence="1">
    <location>
        <begin position="59"/>
        <end position="79"/>
    </location>
</feature>
<feature type="transmembrane region" description="Helical" evidence="1">
    <location>
        <begin position="95"/>
        <end position="115"/>
    </location>
</feature>
<feature type="transmembrane region" description="Helical" evidence="1">
    <location>
        <begin position="125"/>
        <end position="145"/>
    </location>
</feature>
<feature type="transmembrane region" description="Helical" evidence="1">
    <location>
        <begin position="154"/>
        <end position="174"/>
    </location>
</feature>
<feature type="transmembrane region" description="Helical" evidence="1">
    <location>
        <begin position="179"/>
        <end position="199"/>
    </location>
</feature>
<feature type="transmembrane region" description="Helical" evidence="1">
    <location>
        <begin position="213"/>
        <end position="233"/>
    </location>
</feature>
<feature type="transmembrane region" description="Helical" evidence="1">
    <location>
        <begin position="262"/>
        <end position="282"/>
    </location>
</feature>
<feature type="transmembrane region" description="Helical" evidence="1">
    <location>
        <begin position="288"/>
        <end position="308"/>
    </location>
</feature>
<feature type="transmembrane region" description="Helical" evidence="1">
    <location>
        <begin position="331"/>
        <end position="351"/>
    </location>
</feature>
<feature type="transmembrane region" description="Helical" evidence="1">
    <location>
        <begin position="364"/>
        <end position="384"/>
    </location>
</feature>
<name>NHAA2_SHEDO</name>
<dbReference type="EMBL" id="CP000302">
    <property type="protein sequence ID" value="ABE56057.1"/>
    <property type="molecule type" value="Genomic_DNA"/>
</dbReference>
<dbReference type="RefSeq" id="WP_011497207.1">
    <property type="nucleotide sequence ID" value="NC_007954.1"/>
</dbReference>
<dbReference type="SMR" id="Q12KG9"/>
<dbReference type="STRING" id="318161.Sden_2778"/>
<dbReference type="KEGG" id="sdn:Sden_2778"/>
<dbReference type="eggNOG" id="COG3004">
    <property type="taxonomic scope" value="Bacteria"/>
</dbReference>
<dbReference type="HOGENOM" id="CLU_015803_1_0_6"/>
<dbReference type="OrthoDB" id="9808135at2"/>
<dbReference type="Proteomes" id="UP000001982">
    <property type="component" value="Chromosome"/>
</dbReference>
<dbReference type="GO" id="GO:0005886">
    <property type="term" value="C:plasma membrane"/>
    <property type="evidence" value="ECO:0007669"/>
    <property type="project" value="UniProtKB-SubCell"/>
</dbReference>
<dbReference type="GO" id="GO:0015385">
    <property type="term" value="F:sodium:proton antiporter activity"/>
    <property type="evidence" value="ECO:0007669"/>
    <property type="project" value="TreeGrafter"/>
</dbReference>
<dbReference type="GO" id="GO:0006885">
    <property type="term" value="P:regulation of pH"/>
    <property type="evidence" value="ECO:0007669"/>
    <property type="project" value="InterPro"/>
</dbReference>
<dbReference type="Gene3D" id="1.20.1530.10">
    <property type="entry name" value="Na+/H+ antiporter like domain"/>
    <property type="match status" value="1"/>
</dbReference>
<dbReference type="HAMAP" id="MF_01844">
    <property type="entry name" value="NhaA"/>
    <property type="match status" value="1"/>
</dbReference>
<dbReference type="InterPro" id="IPR023171">
    <property type="entry name" value="Na/H_antiporter_dom_sf"/>
</dbReference>
<dbReference type="InterPro" id="IPR004670">
    <property type="entry name" value="NhaA"/>
</dbReference>
<dbReference type="NCBIfam" id="TIGR00773">
    <property type="entry name" value="NhaA"/>
    <property type="match status" value="1"/>
</dbReference>
<dbReference type="NCBIfam" id="NF007111">
    <property type="entry name" value="PRK09560.1"/>
    <property type="match status" value="1"/>
</dbReference>
<dbReference type="NCBIfam" id="NF007112">
    <property type="entry name" value="PRK09561.1"/>
    <property type="match status" value="1"/>
</dbReference>
<dbReference type="PANTHER" id="PTHR30341:SF0">
    <property type="entry name" value="NA(+)_H(+) ANTIPORTER NHAA"/>
    <property type="match status" value="1"/>
</dbReference>
<dbReference type="PANTHER" id="PTHR30341">
    <property type="entry name" value="SODIUM ION/PROTON ANTIPORTER NHAA-RELATED"/>
    <property type="match status" value="1"/>
</dbReference>
<dbReference type="Pfam" id="PF06965">
    <property type="entry name" value="Na_H_antiport_1"/>
    <property type="match status" value="1"/>
</dbReference>
<protein>
    <recommendedName>
        <fullName evidence="1">Na(+)/H(+) antiporter NhaA 2</fullName>
    </recommendedName>
    <alternativeName>
        <fullName evidence="1">Sodium/proton antiporter NhaA 2</fullName>
    </alternativeName>
</protein>
<sequence>MVQKIKAFLSQESSGGILLMLAVAMAMLLANSPLAGLYQGFLDTPVQVRFGQLDINKPLLLWVNDGLMALFFLLIGLEVKRELVEGALSSVSKASLPTFAAIGGMVFPALVYLGFNFGNEATQNGWAIPAATDIAFALGVLALLGNRVPVALKVFLLALAIIDDIGVIVIIALFYSSDLSITSLVIAAIAIGSMVILNLKGVRTLTPYALLGLLLWIAVLKSGVHATLAGVVIAFCIPLKVKPGEESPSRYLEHSLHPWSTFMILPLFAFANAGLSLSGMSLASLAEPAALGVMLGLLLGKPLGVLLFSYAAVKLKWASLPQGVNWQQISAVAVLCGVGFTMSIFISSLAFEHSAVDVGNYARLGTLVGSMLSASIAYFWLTKVLNDDKGETDENKNS</sequence>
<organism>
    <name type="scientific">Shewanella denitrificans (strain OS217 / ATCC BAA-1090 / DSM 15013)</name>
    <dbReference type="NCBI Taxonomy" id="318161"/>
    <lineage>
        <taxon>Bacteria</taxon>
        <taxon>Pseudomonadati</taxon>
        <taxon>Pseudomonadota</taxon>
        <taxon>Gammaproteobacteria</taxon>
        <taxon>Alteromonadales</taxon>
        <taxon>Shewanellaceae</taxon>
        <taxon>Shewanella</taxon>
    </lineage>
</organism>
<reference key="1">
    <citation type="submission" date="2006-03" db="EMBL/GenBank/DDBJ databases">
        <title>Complete sequence of Shewanella denitrificans OS217.</title>
        <authorList>
            <consortium name="US DOE Joint Genome Institute"/>
            <person name="Copeland A."/>
            <person name="Lucas S."/>
            <person name="Lapidus A."/>
            <person name="Barry K."/>
            <person name="Detter J.C."/>
            <person name="Glavina del Rio T."/>
            <person name="Hammon N."/>
            <person name="Israni S."/>
            <person name="Dalin E."/>
            <person name="Tice H."/>
            <person name="Pitluck S."/>
            <person name="Brettin T."/>
            <person name="Bruce D."/>
            <person name="Han C."/>
            <person name="Tapia R."/>
            <person name="Gilna P."/>
            <person name="Kiss H."/>
            <person name="Schmutz J."/>
            <person name="Larimer F."/>
            <person name="Land M."/>
            <person name="Hauser L."/>
            <person name="Kyrpides N."/>
            <person name="Lykidis A."/>
            <person name="Richardson P."/>
        </authorList>
    </citation>
    <scope>NUCLEOTIDE SEQUENCE [LARGE SCALE GENOMIC DNA]</scope>
    <source>
        <strain>OS217 / ATCC BAA-1090 / DSM 15013</strain>
    </source>
</reference>
<comment type="function">
    <text evidence="1">Na(+)/H(+) antiporter that extrudes sodium in exchange for external protons.</text>
</comment>
<comment type="catalytic activity">
    <reaction evidence="1">
        <text>Na(+)(in) + 2 H(+)(out) = Na(+)(out) + 2 H(+)(in)</text>
        <dbReference type="Rhea" id="RHEA:29251"/>
        <dbReference type="ChEBI" id="CHEBI:15378"/>
        <dbReference type="ChEBI" id="CHEBI:29101"/>
    </reaction>
    <physiologicalReaction direction="left-to-right" evidence="1">
        <dbReference type="Rhea" id="RHEA:29252"/>
    </physiologicalReaction>
</comment>
<comment type="subcellular location">
    <subcellularLocation>
        <location evidence="1">Cell inner membrane</location>
        <topology evidence="1">Multi-pass membrane protein</topology>
    </subcellularLocation>
</comment>
<comment type="similarity">
    <text evidence="1">Belongs to the NhaA Na(+)/H(+) (TC 2.A.33) antiporter family.</text>
</comment>
<keyword id="KW-0050">Antiport</keyword>
<keyword id="KW-0997">Cell inner membrane</keyword>
<keyword id="KW-1003">Cell membrane</keyword>
<keyword id="KW-0406">Ion transport</keyword>
<keyword id="KW-0472">Membrane</keyword>
<keyword id="KW-1185">Reference proteome</keyword>
<keyword id="KW-0915">Sodium</keyword>
<keyword id="KW-0739">Sodium transport</keyword>
<keyword id="KW-0812">Transmembrane</keyword>
<keyword id="KW-1133">Transmembrane helix</keyword>
<keyword id="KW-0813">Transport</keyword>